<accession>A0A0H2ZH12</accession>
<keyword id="KW-1003">Cell membrane</keyword>
<keyword id="KW-0472">Membrane</keyword>
<keyword id="KW-0520">NAD</keyword>
<keyword id="KW-0560">Oxidoreductase</keyword>
<keyword id="KW-0812">Transmembrane</keyword>
<keyword id="KW-1133">Transmembrane helix</keyword>
<reference key="1">
    <citation type="journal article" date="2006" name="Genome Biol.">
        <title>Genomic analysis reveals that Pseudomonas aeruginosa virulence is combinatorial.</title>
        <authorList>
            <person name="Lee D.G."/>
            <person name="Urbach J.M."/>
            <person name="Wu G."/>
            <person name="Liberati N.T."/>
            <person name="Feinbaum R.L."/>
            <person name="Miyata S."/>
            <person name="Diggins L.T."/>
            <person name="He J."/>
            <person name="Saucier M."/>
            <person name="Deziel E."/>
            <person name="Friedman L."/>
            <person name="Li L."/>
            <person name="Grills G."/>
            <person name="Montgomery K."/>
            <person name="Kucherlapati R."/>
            <person name="Rahme L.G."/>
            <person name="Ausubel F.M."/>
        </authorList>
    </citation>
    <scope>NUCLEOTIDE SEQUENCE [LARGE SCALE GENOMIC DNA]</scope>
    <source>
        <strain>UCBPP-PA14</strain>
    </source>
</reference>
<reference key="2">
    <citation type="journal article" date="2017" name="Mol. Microbiol.">
        <title>Growth of Pseudomonas aeruginosa in zinc poor environments is promoted by a nicotianamine-related metallophore.</title>
        <authorList>
            <person name="Mastropasqua M.C."/>
            <person name="D'Orazio M."/>
            <person name="Cerasi M."/>
            <person name="Pacello F."/>
            <person name="Gismondi A."/>
            <person name="Canini A."/>
            <person name="Canuti L."/>
            <person name="Consalvo A."/>
            <person name="Ciavardelli D."/>
            <person name="Chirullo B."/>
            <person name="Pasquali P."/>
            <person name="Battistoni A."/>
        </authorList>
    </citation>
    <scope>INDUCTION</scope>
    <source>
        <strain>UCBPP-PA14</strain>
    </source>
</reference>
<reference key="3">
    <citation type="journal article" date="2017" name="Sci. Rep.">
        <title>Pseudomonas aeruginosa zinc uptake in chelating environment is primarily mediated by the metallophore pseudopaline.</title>
        <authorList>
            <person name="Lhospice S."/>
            <person name="Gomez N.O."/>
            <person name="Ouerdane L."/>
            <person name="Brutesco C."/>
            <person name="Ghssein G."/>
            <person name="Hajjar C."/>
            <person name="Liratni A."/>
            <person name="Wang S."/>
            <person name="Richaud P."/>
            <person name="Bleves S."/>
            <person name="Ball G."/>
            <person name="Borezee-Durant E."/>
            <person name="Lobinski R."/>
            <person name="Pignol D."/>
            <person name="Arnoux P."/>
            <person name="Voulhoux R."/>
        </authorList>
    </citation>
    <scope>FUNCTION</scope>
    <scope>CATALYTIC ACTIVITY</scope>
    <scope>SUBSTRATE SPECIFICITY</scope>
    <scope>INDUCTION</scope>
    <scope>INTERACTION WITH CNTL</scope>
    <source>
        <strain>UCBPP-PA14</strain>
    </source>
</reference>
<comment type="function">
    <text evidence="5">Catalyzes the NADH-dependent reductive condensation of alpha-ketoglutarate to the intermediate formed by the adjacently encoded enzyme CntL, namely (2S)-2-amino-4-{[(1S)-1-carboxy-2-(1H-imidazol-4-yl)ethyl]amino}butanoate, leading to the production of pseudopaline. This is the last step in the biosynthesis of the metallophore pseudopaline, which is involved in the acquisition of nickel and zinc, and thus enables bacterial growth inside the host, where metal access is limited. Therefore, this enzyme probably contributes to Pseudomonas virulence. Can use neither pyruvate nor NADPH in place of alpha-ketoglutarate and NADH, respectively.</text>
</comment>
<comment type="catalytic activity">
    <reaction evidence="5">
        <text>pseudopaline + NAD(+) + H2O = (2S)-2-amino-4-{[(1S)-1-carboxy-2-(1H-imidazol-4-yl)ethyl]amino}butanoate + 2-oxoglutarate + NADH + H(+)</text>
        <dbReference type="Rhea" id="RHEA:59788"/>
        <dbReference type="ChEBI" id="CHEBI:15377"/>
        <dbReference type="ChEBI" id="CHEBI:15378"/>
        <dbReference type="ChEBI" id="CHEBI:16810"/>
        <dbReference type="ChEBI" id="CHEBI:57540"/>
        <dbReference type="ChEBI" id="CHEBI:57945"/>
        <dbReference type="ChEBI" id="CHEBI:143196"/>
        <dbReference type="ChEBI" id="CHEBI:143198"/>
    </reaction>
    <physiologicalReaction direction="right-to-left" evidence="9">
        <dbReference type="Rhea" id="RHEA:59790"/>
    </physiologicalReaction>
</comment>
<comment type="subunit">
    <text evidence="2 5">Homodimer (By similarity). Interacts with CntL (PubMed:29214991).</text>
</comment>
<comment type="subcellular location">
    <subcellularLocation>
        <location evidence="3">Cell membrane</location>
        <topology evidence="3">Single-pass membrane protein</topology>
    </subcellularLocation>
</comment>
<comment type="induction">
    <text evidence="4 5">Is part of the operon cntOLMI that is negatively regulated by zinc level through the Zur repressor, which leads to transcriptional activation of this operon under zinc depletion.</text>
</comment>
<comment type="similarity">
    <text evidence="8">Belongs to the staphylopine dehydrogenase family.</text>
</comment>
<organism>
    <name type="scientific">Pseudomonas aeruginosa (strain UCBPP-PA14)</name>
    <dbReference type="NCBI Taxonomy" id="208963"/>
    <lineage>
        <taxon>Bacteria</taxon>
        <taxon>Pseudomonadati</taxon>
        <taxon>Pseudomonadota</taxon>
        <taxon>Gammaproteobacteria</taxon>
        <taxon>Pseudomonadales</taxon>
        <taxon>Pseudomonadaceae</taxon>
        <taxon>Pseudomonas</taxon>
    </lineage>
</organism>
<proteinExistence type="evidence at protein level"/>
<gene>
    <name evidence="7" type="primary">cntM</name>
    <name evidence="6" type="synonym">zrmC</name>
    <name evidence="10" type="ordered locus">PA14_63920</name>
</gene>
<feature type="chain" id="PRO_0000447040" description="Pseudopaline synthase">
    <location>
        <begin position="1"/>
        <end position="433"/>
    </location>
</feature>
<feature type="transmembrane region" description="Helical" evidence="3">
    <location>
        <begin position="7"/>
        <end position="27"/>
    </location>
</feature>
<feature type="active site" description="Proton donor/acceptor" evidence="1">
    <location>
        <position position="219"/>
    </location>
</feature>
<feature type="binding site" evidence="2">
    <location>
        <begin position="16"/>
        <end position="19"/>
    </location>
    <ligand>
        <name>NAD(+)</name>
        <dbReference type="ChEBI" id="CHEBI:57540"/>
    </ligand>
</feature>
<feature type="binding site" evidence="2">
    <location>
        <begin position="39"/>
        <end position="40"/>
    </location>
    <ligand>
        <name>NAD(+)</name>
        <dbReference type="ChEBI" id="CHEBI:57540"/>
    </ligand>
</feature>
<feature type="binding site" evidence="2">
    <location>
        <position position="154"/>
    </location>
    <ligand>
        <name>NAD(+)</name>
        <dbReference type="ChEBI" id="CHEBI:57540"/>
    </ligand>
</feature>
<feature type="binding site" evidence="2">
    <location>
        <position position="364"/>
    </location>
    <ligand>
        <name>NAD(+)</name>
        <dbReference type="ChEBI" id="CHEBI:57540"/>
    </ligand>
</feature>
<name>ODH_PSEAB</name>
<protein>
    <recommendedName>
        <fullName evidence="9">Pseudopaline synthase</fullName>
        <ecNumber evidence="5">1.5.1.-</ecNumber>
    </recommendedName>
    <alternativeName>
        <fullName>Opine dehydrogenase</fullName>
        <shortName>ODH</shortName>
    </alternativeName>
    <alternativeName>
        <fullName>Pseudopaline dehydrogenase</fullName>
    </alternativeName>
</protein>
<evidence type="ECO:0000250" key="1">
    <source>
        <dbReference type="UniProtKB" id="Q8CKU7"/>
    </source>
</evidence>
<evidence type="ECO:0000250" key="2">
    <source>
        <dbReference type="UniProtKB" id="Q9HUX5"/>
    </source>
</evidence>
<evidence type="ECO:0000255" key="3"/>
<evidence type="ECO:0000269" key="4">
    <source>
    </source>
</evidence>
<evidence type="ECO:0000269" key="5">
    <source>
    </source>
</evidence>
<evidence type="ECO:0000303" key="6">
    <source>
    </source>
</evidence>
<evidence type="ECO:0000303" key="7">
    <source>
    </source>
</evidence>
<evidence type="ECO:0000305" key="8"/>
<evidence type="ECO:0000305" key="9">
    <source>
    </source>
</evidence>
<evidence type="ECO:0000312" key="10">
    <source>
        <dbReference type="EMBL" id="ABJ14219.1"/>
    </source>
</evidence>
<sequence>MNAADESLGNVLLVGLGAVAIQVALDLRRHGAGRLGALNHPGRRSQRIAEALARGACLQLEGQGQHRWLSGNAALDVFHQDPAELRDDWQTLVLCVPADSYLDVVRGLPWERLGGVRTLLLVSAFIGANLLVRSALPAGCQATVLSLSSYYAATKVIDETQPLRALTKAVKRRVYLGSSRPDCPARETWRRVLAGSGVEVVPLATPEAAEGRNVTTYVHSPFFLGEFALARILSEQGPPGFMYKLYPEGPITPGAIGAMRRLWCELSELLRRMGAEPLNLLRFLNDDNYPVHETMLPRAAIDGFAEAGAERQEYLLFVRYAALLVDPFSPADEQGRHFDFSAVPFRRVSRDEDGLWRLPRVPLEDYRKLALIVALAAHFDLAMPQARSLLASYENAVSRFIDCQGASQCHPSLYPIDSRPAADAIYRQWCSTC</sequence>
<dbReference type="EC" id="1.5.1.-" evidence="5"/>
<dbReference type="EMBL" id="CP000438">
    <property type="protein sequence ID" value="ABJ14219.1"/>
    <property type="molecule type" value="Genomic_DNA"/>
</dbReference>
<dbReference type="RefSeq" id="WP_003095356.1">
    <property type="nucleotide sequence ID" value="NZ_CP034244.1"/>
</dbReference>
<dbReference type="SMR" id="A0A0H2ZH12"/>
<dbReference type="KEGG" id="pau:PA14_63920"/>
<dbReference type="HOGENOM" id="CLU_637619_0_0_6"/>
<dbReference type="BioCyc" id="PAER208963:G1G74-5405-MONOMER"/>
<dbReference type="Proteomes" id="UP000000653">
    <property type="component" value="Chromosome"/>
</dbReference>
<dbReference type="GO" id="GO:0005886">
    <property type="term" value="C:plasma membrane"/>
    <property type="evidence" value="ECO:0007669"/>
    <property type="project" value="UniProtKB-SubCell"/>
</dbReference>
<dbReference type="GO" id="GO:0016491">
    <property type="term" value="F:oxidoreductase activity"/>
    <property type="evidence" value="ECO:0007669"/>
    <property type="project" value="UniProtKB-KW"/>
</dbReference>
<dbReference type="InterPro" id="IPR036291">
    <property type="entry name" value="NAD(P)-bd_dom_sf"/>
</dbReference>
<dbReference type="InterPro" id="IPR016935">
    <property type="entry name" value="Opine_metallophore_DH"/>
</dbReference>
<dbReference type="Pfam" id="PF10100">
    <property type="entry name" value="Staph_opine_DH"/>
    <property type="match status" value="1"/>
</dbReference>
<dbReference type="PIRSF" id="PIRSF029692">
    <property type="entry name" value="UCP029692"/>
    <property type="match status" value="1"/>
</dbReference>
<dbReference type="SUPFAM" id="SSF51735">
    <property type="entry name" value="NAD(P)-binding Rossmann-fold domains"/>
    <property type="match status" value="1"/>
</dbReference>